<sequence length="106" mass="12071">MSTAIAQQKIRIRLKAFDRRMLDLSCDKIIETADNTAATAIGPIPLPTKRKIYCVLRSPHVDKDSREHFETRTHRRIIDIYNPSAKTIDALMKLDLPSGVDIEVKL</sequence>
<proteinExistence type="inferred from homology"/>
<dbReference type="EMBL" id="CP000878">
    <property type="protein sequence ID" value="ABX09561.1"/>
    <property type="molecule type" value="Genomic_DNA"/>
</dbReference>
<dbReference type="RefSeq" id="WP_012196182.1">
    <property type="nucleotide sequence ID" value="NC_009976.1"/>
</dbReference>
<dbReference type="SMR" id="A9BCJ9"/>
<dbReference type="STRING" id="93059.P9211_16301"/>
<dbReference type="KEGG" id="pmj:P9211_16301"/>
<dbReference type="eggNOG" id="COG0051">
    <property type="taxonomic scope" value="Bacteria"/>
</dbReference>
<dbReference type="HOGENOM" id="CLU_122625_1_3_3"/>
<dbReference type="OrthoDB" id="9804464at2"/>
<dbReference type="Proteomes" id="UP000000788">
    <property type="component" value="Chromosome"/>
</dbReference>
<dbReference type="GO" id="GO:1990904">
    <property type="term" value="C:ribonucleoprotein complex"/>
    <property type="evidence" value="ECO:0007669"/>
    <property type="project" value="UniProtKB-KW"/>
</dbReference>
<dbReference type="GO" id="GO:0005840">
    <property type="term" value="C:ribosome"/>
    <property type="evidence" value="ECO:0007669"/>
    <property type="project" value="UniProtKB-KW"/>
</dbReference>
<dbReference type="GO" id="GO:0003735">
    <property type="term" value="F:structural constituent of ribosome"/>
    <property type="evidence" value="ECO:0007669"/>
    <property type="project" value="InterPro"/>
</dbReference>
<dbReference type="GO" id="GO:0000049">
    <property type="term" value="F:tRNA binding"/>
    <property type="evidence" value="ECO:0007669"/>
    <property type="project" value="UniProtKB-UniRule"/>
</dbReference>
<dbReference type="GO" id="GO:0006412">
    <property type="term" value="P:translation"/>
    <property type="evidence" value="ECO:0007669"/>
    <property type="project" value="UniProtKB-UniRule"/>
</dbReference>
<dbReference type="FunFam" id="3.30.70.600:FF:000001">
    <property type="entry name" value="30S ribosomal protein S10"/>
    <property type="match status" value="1"/>
</dbReference>
<dbReference type="Gene3D" id="3.30.70.600">
    <property type="entry name" value="Ribosomal protein S10 domain"/>
    <property type="match status" value="1"/>
</dbReference>
<dbReference type="HAMAP" id="MF_00508">
    <property type="entry name" value="Ribosomal_uS10"/>
    <property type="match status" value="1"/>
</dbReference>
<dbReference type="InterPro" id="IPR001848">
    <property type="entry name" value="Ribosomal_uS10"/>
</dbReference>
<dbReference type="InterPro" id="IPR027486">
    <property type="entry name" value="Ribosomal_uS10_dom"/>
</dbReference>
<dbReference type="InterPro" id="IPR036838">
    <property type="entry name" value="Ribosomal_uS10_dom_sf"/>
</dbReference>
<dbReference type="NCBIfam" id="NF001861">
    <property type="entry name" value="PRK00596.1"/>
    <property type="match status" value="1"/>
</dbReference>
<dbReference type="NCBIfam" id="TIGR01049">
    <property type="entry name" value="rpsJ_bact"/>
    <property type="match status" value="1"/>
</dbReference>
<dbReference type="PANTHER" id="PTHR11700">
    <property type="entry name" value="30S RIBOSOMAL PROTEIN S10 FAMILY MEMBER"/>
    <property type="match status" value="1"/>
</dbReference>
<dbReference type="Pfam" id="PF00338">
    <property type="entry name" value="Ribosomal_S10"/>
    <property type="match status" value="1"/>
</dbReference>
<dbReference type="PRINTS" id="PR00971">
    <property type="entry name" value="RIBOSOMALS10"/>
</dbReference>
<dbReference type="SMART" id="SM01403">
    <property type="entry name" value="Ribosomal_S10"/>
    <property type="match status" value="1"/>
</dbReference>
<dbReference type="SUPFAM" id="SSF54999">
    <property type="entry name" value="Ribosomal protein S10"/>
    <property type="match status" value="1"/>
</dbReference>
<comment type="function">
    <text evidence="1">Involved in the binding of tRNA to the ribosomes.</text>
</comment>
<comment type="subunit">
    <text evidence="1">Part of the 30S ribosomal subunit.</text>
</comment>
<comment type="similarity">
    <text evidence="1">Belongs to the universal ribosomal protein uS10 family.</text>
</comment>
<feature type="chain" id="PRO_1000127166" description="Small ribosomal subunit protein uS10">
    <location>
        <begin position="1"/>
        <end position="106"/>
    </location>
</feature>
<name>RS10_PROM4</name>
<protein>
    <recommendedName>
        <fullName evidence="1">Small ribosomal subunit protein uS10</fullName>
    </recommendedName>
    <alternativeName>
        <fullName evidence="2">30S ribosomal protein S10</fullName>
    </alternativeName>
</protein>
<gene>
    <name evidence="1" type="primary">rpsJ</name>
    <name evidence="1" type="synonym">rps10</name>
    <name type="ordered locus">P9211_16301</name>
</gene>
<organism>
    <name type="scientific">Prochlorococcus marinus (strain MIT 9211)</name>
    <dbReference type="NCBI Taxonomy" id="93059"/>
    <lineage>
        <taxon>Bacteria</taxon>
        <taxon>Bacillati</taxon>
        <taxon>Cyanobacteriota</taxon>
        <taxon>Cyanophyceae</taxon>
        <taxon>Synechococcales</taxon>
        <taxon>Prochlorococcaceae</taxon>
        <taxon>Prochlorococcus</taxon>
    </lineage>
</organism>
<reference key="1">
    <citation type="journal article" date="2007" name="PLoS Genet.">
        <title>Patterns and implications of gene gain and loss in the evolution of Prochlorococcus.</title>
        <authorList>
            <person name="Kettler G.C."/>
            <person name="Martiny A.C."/>
            <person name="Huang K."/>
            <person name="Zucker J."/>
            <person name="Coleman M.L."/>
            <person name="Rodrigue S."/>
            <person name="Chen F."/>
            <person name="Lapidus A."/>
            <person name="Ferriera S."/>
            <person name="Johnson J."/>
            <person name="Steglich C."/>
            <person name="Church G.M."/>
            <person name="Richardson P."/>
            <person name="Chisholm S.W."/>
        </authorList>
    </citation>
    <scope>NUCLEOTIDE SEQUENCE [LARGE SCALE GENOMIC DNA]</scope>
    <source>
        <strain>MIT 9211</strain>
    </source>
</reference>
<accession>A9BCJ9</accession>
<evidence type="ECO:0000255" key="1">
    <source>
        <dbReference type="HAMAP-Rule" id="MF_00508"/>
    </source>
</evidence>
<evidence type="ECO:0000305" key="2"/>
<keyword id="KW-1185">Reference proteome</keyword>
<keyword id="KW-0687">Ribonucleoprotein</keyword>
<keyword id="KW-0689">Ribosomal protein</keyword>